<sequence>MKTFPILALLAIVATTATTAVRVPVPQLQLQNPSQQQPQEQVPLVQEQQFQGQQQPFPPQQPYPQPQPFPSQQPYLQLQPFPQPQLPYPQPQPFRPQQPYPQPQPQYSQPQQPISQQQQQQQQQQQQQQQILQQILQQQLIPCRDVVLQQHNIAHGSSQVLQESTYQLVQQLCCQQLWQIPEQSRCQAIHNVVHAIILHQQHHHHQQQQQQQQQQPLSQVSFQQPQQQYPSGQGFFQPSQQNPQAQGSFQPQQLPQFEEIRNLALQTLPAMCNVYIPPYCTIAPFGIFGTN</sequence>
<accession>P04722</accession>
<dbReference type="EMBL" id="M10092">
    <property type="protein sequence ID" value="AAA34276.1"/>
    <property type="molecule type" value="mRNA"/>
</dbReference>
<dbReference type="PIR" id="C22364">
    <property type="entry name" value="C22364"/>
</dbReference>
<dbReference type="PIR" id="T06498">
    <property type="entry name" value="T06498"/>
</dbReference>
<dbReference type="SMR" id="P04722"/>
<dbReference type="STRING" id="4565.P04722"/>
<dbReference type="EvolutionaryTrace" id="P04722"/>
<dbReference type="Proteomes" id="UP000019116">
    <property type="component" value="Unplaced"/>
</dbReference>
<dbReference type="ExpressionAtlas" id="P04722">
    <property type="expression patterns" value="baseline and differential"/>
</dbReference>
<dbReference type="GO" id="GO:0045735">
    <property type="term" value="F:nutrient reservoir activity"/>
    <property type="evidence" value="ECO:0007669"/>
    <property type="project" value="UniProtKB-KW"/>
</dbReference>
<dbReference type="Gene3D" id="1.10.110.10">
    <property type="entry name" value="Plant lipid-transfer and hydrophobic proteins"/>
    <property type="match status" value="1"/>
</dbReference>
<dbReference type="InterPro" id="IPR036312">
    <property type="entry name" value="Bifun_inhib/LTP/seed_sf"/>
</dbReference>
<dbReference type="InterPro" id="IPR016140">
    <property type="entry name" value="Bifunc_inhib/LTP/seed_store"/>
</dbReference>
<dbReference type="InterPro" id="IPR001954">
    <property type="entry name" value="Glia_glutenin"/>
</dbReference>
<dbReference type="PANTHER" id="PTHR33454:SF7">
    <property type="entry name" value="ALPHA_BETA-GLIADIN MM1"/>
    <property type="match status" value="1"/>
</dbReference>
<dbReference type="PANTHER" id="PTHR33454">
    <property type="entry name" value="PROLAMIN PPROL 14P"/>
    <property type="match status" value="1"/>
</dbReference>
<dbReference type="Pfam" id="PF13016">
    <property type="entry name" value="Gliadin"/>
    <property type="match status" value="1"/>
</dbReference>
<dbReference type="PRINTS" id="PR00208">
    <property type="entry name" value="GLIADGLUTEN"/>
</dbReference>
<dbReference type="PRINTS" id="PR00209">
    <property type="entry name" value="GLIADIN"/>
</dbReference>
<dbReference type="SMART" id="SM00499">
    <property type="entry name" value="AAI"/>
    <property type="match status" value="1"/>
</dbReference>
<dbReference type="SUPFAM" id="SSF47699">
    <property type="entry name" value="Bifunctional inhibitor/lipid-transfer protein/seed storage 2S albumin"/>
    <property type="match status" value="1"/>
</dbReference>
<feature type="signal peptide">
    <location>
        <begin position="1"/>
        <end position="20"/>
    </location>
</feature>
<feature type="chain" id="PRO_0000032269" description="Alpha/beta-gliadin A-II">
    <location>
        <begin position="21"/>
        <end position="291"/>
    </location>
</feature>
<feature type="region of interest" description="Disordered" evidence="2">
    <location>
        <begin position="32"/>
        <end position="120"/>
    </location>
</feature>
<feature type="region of interest" description="Disordered" evidence="2">
    <location>
        <begin position="227"/>
        <end position="250"/>
    </location>
</feature>
<feature type="compositionally biased region" description="Low complexity" evidence="2">
    <location>
        <begin position="32"/>
        <end position="55"/>
    </location>
</feature>
<feature type="compositionally biased region" description="Pro residues" evidence="2">
    <location>
        <begin position="56"/>
        <end position="71"/>
    </location>
</feature>
<feature type="compositionally biased region" description="Pro residues" evidence="2">
    <location>
        <begin position="81"/>
        <end position="104"/>
    </location>
</feature>
<feature type="compositionally biased region" description="Low complexity" evidence="2">
    <location>
        <begin position="105"/>
        <end position="120"/>
    </location>
</feature>
<feature type="compositionally biased region" description="Low complexity" evidence="2">
    <location>
        <begin position="227"/>
        <end position="237"/>
    </location>
</feature>
<feature type="compositionally biased region" description="Polar residues" evidence="2">
    <location>
        <begin position="238"/>
        <end position="250"/>
    </location>
</feature>
<evidence type="ECO:0000250" key="1"/>
<evidence type="ECO:0000256" key="2">
    <source>
        <dbReference type="SAM" id="MobiDB-lite"/>
    </source>
</evidence>
<evidence type="ECO:0000305" key="3"/>
<organism>
    <name type="scientific">Triticum aestivum</name>
    <name type="common">Wheat</name>
    <dbReference type="NCBI Taxonomy" id="4565"/>
    <lineage>
        <taxon>Eukaryota</taxon>
        <taxon>Viridiplantae</taxon>
        <taxon>Streptophyta</taxon>
        <taxon>Embryophyta</taxon>
        <taxon>Tracheophyta</taxon>
        <taxon>Spermatophyta</taxon>
        <taxon>Magnoliopsida</taxon>
        <taxon>Liliopsida</taxon>
        <taxon>Poales</taxon>
        <taxon>Poaceae</taxon>
        <taxon>BOP clade</taxon>
        <taxon>Pooideae</taxon>
        <taxon>Triticodae</taxon>
        <taxon>Triticeae</taxon>
        <taxon>Triticinae</taxon>
        <taxon>Triticum</taxon>
    </lineage>
</organism>
<comment type="function">
    <text>Gliadin is the major seed storage protein in wheat.</text>
</comment>
<comment type="PTM">
    <text evidence="1">Substrate of transglutaminase.</text>
</comment>
<comment type="allergen">
    <text evidence="1">Causes an allergic reaction in human. Is the cause of the celiac disease, also known as celiac sprue or gluten-sensitive enteropathy (By similarity).</text>
</comment>
<comment type="miscellaneous">
    <text>The alpha/beta-gliadins can be divided into 5 homology classes. Sequence divergence between the classes is due to single base substitutions and to duplications or deletions within or near direct repeats. There are more than a 100 copies of the gene for alpha/beta-gliadin per haploid genome.</text>
</comment>
<comment type="similarity">
    <text evidence="3">Belongs to the gliadin/glutenin family.</text>
</comment>
<reference key="1">
    <citation type="journal article" date="1985" name="J. Biol. Chem.">
        <title>Evolution and heterogeneity of the alpha-/beta-type and gamma-type gliadin DNA sequences.</title>
        <authorList>
            <person name="Okita T.W."/>
            <person name="Cheesbrough V."/>
            <person name="Reeves C.D."/>
        </authorList>
    </citation>
    <scope>NUCLEOTIDE SEQUENCE [MRNA]</scope>
</reference>
<proteinExistence type="evidence at transcript level"/>
<keyword id="KW-0020">Allergen</keyword>
<keyword id="KW-1185">Reference proteome</keyword>
<keyword id="KW-0677">Repeat</keyword>
<keyword id="KW-0708">Seed storage protein</keyword>
<keyword id="KW-0732">Signal</keyword>
<keyword id="KW-0758">Storage protein</keyword>
<name>GDA2_WHEAT</name>
<protein>
    <recommendedName>
        <fullName>Alpha/beta-gliadin A-II</fullName>
    </recommendedName>
    <alternativeName>
        <fullName>Prolamin</fullName>
    </alternativeName>
</protein>